<sequence length="245" mass="26832">MYPVDLHMHTVASTHAYSTLSDYIAQAKQKGIKLFAITDHGPDMEDAPHHWHFINMRIWPRVVDGVGILRGIEANIKNVDGEIDCSGKMFDSLDLIIAGFHEPVFAPHDKATNTQAMIATIASGNVHIISHPGNPKYEIDVKAVAEAAAKHQVALEINNSSFLHSRKGSEDNCRAVAAAVRDAGGWVALGSDSHTAFTMGEFEECLKILDAVDFPPERILNVSPRRLLNFLESRGMAPIAEFADL</sequence>
<reference key="1">
    <citation type="journal article" date="2009" name="PLoS Genet.">
        <title>Organised genome dynamics in the Escherichia coli species results in highly diverse adaptive paths.</title>
        <authorList>
            <person name="Touchon M."/>
            <person name="Hoede C."/>
            <person name="Tenaillon O."/>
            <person name="Barbe V."/>
            <person name="Baeriswyl S."/>
            <person name="Bidet P."/>
            <person name="Bingen E."/>
            <person name="Bonacorsi S."/>
            <person name="Bouchier C."/>
            <person name="Bouvet O."/>
            <person name="Calteau A."/>
            <person name="Chiapello H."/>
            <person name="Clermont O."/>
            <person name="Cruveiller S."/>
            <person name="Danchin A."/>
            <person name="Diard M."/>
            <person name="Dossat C."/>
            <person name="Karoui M.E."/>
            <person name="Frapy E."/>
            <person name="Garry L."/>
            <person name="Ghigo J.M."/>
            <person name="Gilles A.M."/>
            <person name="Johnson J."/>
            <person name="Le Bouguenec C."/>
            <person name="Lescat M."/>
            <person name="Mangenot S."/>
            <person name="Martinez-Jehanne V."/>
            <person name="Matic I."/>
            <person name="Nassif X."/>
            <person name="Oztas S."/>
            <person name="Petit M.A."/>
            <person name="Pichon C."/>
            <person name="Rouy Z."/>
            <person name="Ruf C.S."/>
            <person name="Schneider D."/>
            <person name="Tourret J."/>
            <person name="Vacherie B."/>
            <person name="Vallenet D."/>
            <person name="Medigue C."/>
            <person name="Rocha E.P.C."/>
            <person name="Denamur E."/>
        </authorList>
    </citation>
    <scope>NUCLEOTIDE SEQUENCE [LARGE SCALE GENOMIC DNA]</scope>
    <source>
        <strain>IAI39 / ExPEC</strain>
    </source>
</reference>
<protein>
    <recommendedName>
        <fullName evidence="1">Probable phosphatase YcdX</fullName>
        <ecNumber evidence="1">3.1.3.-</ecNumber>
    </recommendedName>
</protein>
<evidence type="ECO:0000255" key="1">
    <source>
        <dbReference type="HAMAP-Rule" id="MF_01561"/>
    </source>
</evidence>
<gene>
    <name evidence="1" type="primary">ycdX</name>
    <name type="ordered locus">ECIAI39_2129</name>
</gene>
<comment type="cofactor">
    <cofactor evidence="1">
        <name>Zn(2+)</name>
        <dbReference type="ChEBI" id="CHEBI:29105"/>
    </cofactor>
    <text evidence="1">Binds 3 Zn(2+) ions per subunit.</text>
</comment>
<comment type="subunit">
    <text evidence="1">Homotrimer.</text>
</comment>
<comment type="similarity">
    <text evidence="1">Belongs to the PHP family.</text>
</comment>
<accession>B7NLA0</accession>
<keyword id="KW-0378">Hydrolase</keyword>
<keyword id="KW-0479">Metal-binding</keyword>
<keyword id="KW-0862">Zinc</keyword>
<name>YCDX_ECO7I</name>
<dbReference type="EC" id="3.1.3.-" evidence="1"/>
<dbReference type="EMBL" id="CU928164">
    <property type="protein sequence ID" value="CAR18256.1"/>
    <property type="molecule type" value="Genomic_DNA"/>
</dbReference>
<dbReference type="RefSeq" id="WP_000283664.1">
    <property type="nucleotide sequence ID" value="NC_011750.1"/>
</dbReference>
<dbReference type="RefSeq" id="YP_002408092.1">
    <property type="nucleotide sequence ID" value="NC_011750.1"/>
</dbReference>
<dbReference type="SMR" id="B7NLA0"/>
<dbReference type="STRING" id="585057.ECIAI39_2129"/>
<dbReference type="GeneID" id="93776384"/>
<dbReference type="KEGG" id="ect:ECIAI39_2129"/>
<dbReference type="PATRIC" id="fig|585057.6.peg.2215"/>
<dbReference type="HOGENOM" id="CLU_061999_0_1_6"/>
<dbReference type="Proteomes" id="UP000000749">
    <property type="component" value="Chromosome"/>
</dbReference>
<dbReference type="GO" id="GO:0005829">
    <property type="term" value="C:cytosol"/>
    <property type="evidence" value="ECO:0007669"/>
    <property type="project" value="TreeGrafter"/>
</dbReference>
<dbReference type="GO" id="GO:0016791">
    <property type="term" value="F:phosphatase activity"/>
    <property type="evidence" value="ECO:0007669"/>
    <property type="project" value="UniProtKB-UniRule"/>
</dbReference>
<dbReference type="GO" id="GO:0008270">
    <property type="term" value="F:zinc ion binding"/>
    <property type="evidence" value="ECO:0007669"/>
    <property type="project" value="UniProtKB-UniRule"/>
</dbReference>
<dbReference type="GO" id="GO:0071978">
    <property type="term" value="P:bacterial-type flagellum-dependent swarming motility"/>
    <property type="evidence" value="ECO:0007669"/>
    <property type="project" value="TreeGrafter"/>
</dbReference>
<dbReference type="CDD" id="cd07437">
    <property type="entry name" value="PHP_HisPPase_Ycdx_like"/>
    <property type="match status" value="1"/>
</dbReference>
<dbReference type="FunFam" id="3.20.20.140:FF:000008">
    <property type="entry name" value="Probable phosphatase YcdX"/>
    <property type="match status" value="1"/>
</dbReference>
<dbReference type="Gene3D" id="3.20.20.140">
    <property type="entry name" value="Metal-dependent hydrolases"/>
    <property type="match status" value="1"/>
</dbReference>
<dbReference type="HAMAP" id="MF_01561">
    <property type="entry name" value="YcdX_phosphat"/>
    <property type="match status" value="1"/>
</dbReference>
<dbReference type="InterPro" id="IPR023710">
    <property type="entry name" value="Phosphatase_YcdX_put"/>
</dbReference>
<dbReference type="InterPro" id="IPR004013">
    <property type="entry name" value="PHP_dom"/>
</dbReference>
<dbReference type="InterPro" id="IPR050243">
    <property type="entry name" value="PHP_phosphatase"/>
</dbReference>
<dbReference type="InterPro" id="IPR003141">
    <property type="entry name" value="Pol/His_phosphatase_N"/>
</dbReference>
<dbReference type="InterPro" id="IPR016195">
    <property type="entry name" value="Pol/histidinol_Pase-like"/>
</dbReference>
<dbReference type="NCBIfam" id="NF006702">
    <property type="entry name" value="PRK09248.1"/>
    <property type="match status" value="1"/>
</dbReference>
<dbReference type="PANTHER" id="PTHR36928">
    <property type="entry name" value="PHOSPHATASE YCDX-RELATED"/>
    <property type="match status" value="1"/>
</dbReference>
<dbReference type="PANTHER" id="PTHR36928:SF1">
    <property type="entry name" value="PHOSPHATASE YCDX-RELATED"/>
    <property type="match status" value="1"/>
</dbReference>
<dbReference type="Pfam" id="PF02811">
    <property type="entry name" value="PHP"/>
    <property type="match status" value="1"/>
</dbReference>
<dbReference type="SMART" id="SM00481">
    <property type="entry name" value="POLIIIAc"/>
    <property type="match status" value="1"/>
</dbReference>
<dbReference type="SUPFAM" id="SSF89550">
    <property type="entry name" value="PHP domain-like"/>
    <property type="match status" value="1"/>
</dbReference>
<proteinExistence type="inferred from homology"/>
<organism>
    <name type="scientific">Escherichia coli O7:K1 (strain IAI39 / ExPEC)</name>
    <dbReference type="NCBI Taxonomy" id="585057"/>
    <lineage>
        <taxon>Bacteria</taxon>
        <taxon>Pseudomonadati</taxon>
        <taxon>Pseudomonadota</taxon>
        <taxon>Gammaproteobacteria</taxon>
        <taxon>Enterobacterales</taxon>
        <taxon>Enterobacteriaceae</taxon>
        <taxon>Escherichia</taxon>
    </lineage>
</organism>
<feature type="chain" id="PRO_1000147131" description="Probable phosphatase YcdX">
    <location>
        <begin position="1"/>
        <end position="245"/>
    </location>
</feature>
<feature type="binding site" evidence="1">
    <location>
        <position position="7"/>
    </location>
    <ligand>
        <name>Zn(2+)</name>
        <dbReference type="ChEBI" id="CHEBI:29105"/>
        <label>1</label>
    </ligand>
</feature>
<feature type="binding site" evidence="1">
    <location>
        <position position="9"/>
    </location>
    <ligand>
        <name>Zn(2+)</name>
        <dbReference type="ChEBI" id="CHEBI:29105"/>
        <label>1</label>
    </ligand>
</feature>
<feature type="binding site" evidence="1">
    <location>
        <position position="15"/>
    </location>
    <ligand>
        <name>Zn(2+)</name>
        <dbReference type="ChEBI" id="CHEBI:29105"/>
        <label>2</label>
    </ligand>
</feature>
<feature type="binding site" evidence="1">
    <location>
        <position position="40"/>
    </location>
    <ligand>
        <name>Zn(2+)</name>
        <dbReference type="ChEBI" id="CHEBI:29105"/>
        <label>2</label>
    </ligand>
</feature>
<feature type="binding site" evidence="1">
    <location>
        <position position="73"/>
    </location>
    <ligand>
        <name>Zn(2+)</name>
        <dbReference type="ChEBI" id="CHEBI:29105"/>
        <label>1</label>
    </ligand>
</feature>
<feature type="binding site" evidence="1">
    <location>
        <position position="73"/>
    </location>
    <ligand>
        <name>Zn(2+)</name>
        <dbReference type="ChEBI" id="CHEBI:29105"/>
        <label>3</label>
    </ligand>
</feature>
<feature type="binding site" evidence="1">
    <location>
        <position position="101"/>
    </location>
    <ligand>
        <name>Zn(2+)</name>
        <dbReference type="ChEBI" id="CHEBI:29105"/>
        <label>3</label>
    </ligand>
</feature>
<feature type="binding site" evidence="1">
    <location>
        <position position="131"/>
    </location>
    <ligand>
        <name>Zn(2+)</name>
        <dbReference type="ChEBI" id="CHEBI:29105"/>
        <label>3</label>
    </ligand>
</feature>
<feature type="binding site" evidence="1">
    <location>
        <position position="192"/>
    </location>
    <ligand>
        <name>Zn(2+)</name>
        <dbReference type="ChEBI" id="CHEBI:29105"/>
        <label>1</label>
    </ligand>
</feature>
<feature type="binding site" evidence="1">
    <location>
        <position position="194"/>
    </location>
    <ligand>
        <name>Zn(2+)</name>
        <dbReference type="ChEBI" id="CHEBI:29105"/>
        <label>2</label>
    </ligand>
</feature>